<accession>Q5T5J6</accession>
<accession>Q8NEK9</accession>
<accession>Q9BZQ7</accession>
<accession>Q9NXQ0</accession>
<feature type="chain" id="PRO_0000251184" description="Transcriptional protein SWT1">
    <location>
        <begin position="1"/>
        <end position="900"/>
    </location>
</feature>
<feature type="domain" description="PINc">
    <location>
        <begin position="388"/>
        <end position="515"/>
    </location>
</feature>
<feature type="region of interest" description="Disordered" evidence="2">
    <location>
        <begin position="1"/>
        <end position="54"/>
    </location>
</feature>
<feature type="compositionally biased region" description="Basic and acidic residues" evidence="2">
    <location>
        <begin position="1"/>
        <end position="18"/>
    </location>
</feature>
<feature type="compositionally biased region" description="Basic and acidic residues" evidence="2">
    <location>
        <begin position="26"/>
        <end position="35"/>
    </location>
</feature>
<feature type="compositionally biased region" description="Low complexity" evidence="2">
    <location>
        <begin position="38"/>
        <end position="48"/>
    </location>
</feature>
<feature type="sequence variant" id="VAR_027652" description="In dbSNP:rs10489579." evidence="4">
    <original>I</original>
    <variation>V</variation>
    <location>
        <position position="148"/>
    </location>
</feature>
<feature type="sequence variant" id="VAR_027653" description="In dbSNP:rs6698109." evidence="4">
    <original>H</original>
    <variation>R</variation>
    <location>
        <position position="536"/>
    </location>
</feature>
<feature type="sequence variant" id="VAR_027654" description="In dbSNP:rs2295950.">
    <original>L</original>
    <variation>F</variation>
    <location>
        <position position="638"/>
    </location>
</feature>
<feature type="sequence variant" id="VAR_027655" description="In dbSNP:rs12041704." evidence="4">
    <original>N</original>
    <variation>D</variation>
    <location>
        <position position="821"/>
    </location>
</feature>
<feature type="sequence conflict" description="In Ref. 1; AAG60612." evidence="5" ref="1">
    <original>L</original>
    <variation>V</variation>
    <location>
        <position position="430"/>
    </location>
</feature>
<feature type="sequence conflict" description="In Ref. 3; AAH30781." evidence="5" ref="3">
    <original>N</original>
    <variation>S</variation>
    <location>
        <position position="571"/>
    </location>
</feature>
<name>SWT1_HUMAN</name>
<evidence type="ECO:0000250" key="1">
    <source>
        <dbReference type="UniProtKB" id="Q12104"/>
    </source>
</evidence>
<evidence type="ECO:0000256" key="2">
    <source>
        <dbReference type="SAM" id="MobiDB-lite"/>
    </source>
</evidence>
<evidence type="ECO:0000269" key="3">
    <source>
    </source>
</evidence>
<evidence type="ECO:0000269" key="4">
    <source>
    </source>
</evidence>
<evidence type="ECO:0000305" key="5"/>
<protein>
    <recommendedName>
        <fullName evidence="1">Transcriptional protein SWT1</fullName>
    </recommendedName>
</protein>
<reference key="1">
    <citation type="journal article" date="2001" name="Genomics">
        <title>Cloning and characterization of 13 novel transcripts and the human RGS8 gene from the 1q25 region encompassing the hereditary prostate cancer (HPC1) locus.</title>
        <authorList>
            <person name="Sood R."/>
            <person name="Bonner T.I."/>
            <person name="Malakowska I."/>
            <person name="Stephan D.A."/>
            <person name="Robbins C.M."/>
            <person name="Connors T.D."/>
            <person name="Morgenbesser S.D."/>
            <person name="Su K."/>
            <person name="Faruque M.U."/>
            <person name="Pinkett H."/>
            <person name="Graham C."/>
            <person name="Baxevanis A.D."/>
            <person name="Klinger K.W."/>
            <person name="Landes G.M."/>
            <person name="Trent J.M."/>
            <person name="Carpten J.D."/>
        </authorList>
    </citation>
    <scope>NUCLEOTIDE SEQUENCE [MRNA]</scope>
    <scope>TISSUE SPECIFICITY</scope>
</reference>
<reference key="2">
    <citation type="journal article" date="2006" name="Nature">
        <title>The DNA sequence and biological annotation of human chromosome 1.</title>
        <authorList>
            <person name="Gregory S.G."/>
            <person name="Barlow K.F."/>
            <person name="McLay K.E."/>
            <person name="Kaul R."/>
            <person name="Swarbreck D."/>
            <person name="Dunham A."/>
            <person name="Scott C.E."/>
            <person name="Howe K.L."/>
            <person name="Woodfine K."/>
            <person name="Spencer C.C.A."/>
            <person name="Jones M.C."/>
            <person name="Gillson C."/>
            <person name="Searle S."/>
            <person name="Zhou Y."/>
            <person name="Kokocinski F."/>
            <person name="McDonald L."/>
            <person name="Evans R."/>
            <person name="Phillips K."/>
            <person name="Atkinson A."/>
            <person name="Cooper R."/>
            <person name="Jones C."/>
            <person name="Hall R.E."/>
            <person name="Andrews T.D."/>
            <person name="Lloyd C."/>
            <person name="Ainscough R."/>
            <person name="Almeida J.P."/>
            <person name="Ambrose K.D."/>
            <person name="Anderson F."/>
            <person name="Andrew R.W."/>
            <person name="Ashwell R.I.S."/>
            <person name="Aubin K."/>
            <person name="Babbage A.K."/>
            <person name="Bagguley C.L."/>
            <person name="Bailey J."/>
            <person name="Beasley H."/>
            <person name="Bethel G."/>
            <person name="Bird C.P."/>
            <person name="Bray-Allen S."/>
            <person name="Brown J.Y."/>
            <person name="Brown A.J."/>
            <person name="Buckley D."/>
            <person name="Burton J."/>
            <person name="Bye J."/>
            <person name="Carder C."/>
            <person name="Chapman J.C."/>
            <person name="Clark S.Y."/>
            <person name="Clarke G."/>
            <person name="Clee C."/>
            <person name="Cobley V."/>
            <person name="Collier R.E."/>
            <person name="Corby N."/>
            <person name="Coville G.J."/>
            <person name="Davies J."/>
            <person name="Deadman R."/>
            <person name="Dunn M."/>
            <person name="Earthrowl M."/>
            <person name="Ellington A.G."/>
            <person name="Errington H."/>
            <person name="Frankish A."/>
            <person name="Frankland J."/>
            <person name="French L."/>
            <person name="Garner P."/>
            <person name="Garnett J."/>
            <person name="Gay L."/>
            <person name="Ghori M.R.J."/>
            <person name="Gibson R."/>
            <person name="Gilby L.M."/>
            <person name="Gillett W."/>
            <person name="Glithero R.J."/>
            <person name="Grafham D.V."/>
            <person name="Griffiths C."/>
            <person name="Griffiths-Jones S."/>
            <person name="Grocock R."/>
            <person name="Hammond S."/>
            <person name="Harrison E.S.I."/>
            <person name="Hart E."/>
            <person name="Haugen E."/>
            <person name="Heath P.D."/>
            <person name="Holmes S."/>
            <person name="Holt K."/>
            <person name="Howden P.J."/>
            <person name="Hunt A.R."/>
            <person name="Hunt S.E."/>
            <person name="Hunter G."/>
            <person name="Isherwood J."/>
            <person name="James R."/>
            <person name="Johnson C."/>
            <person name="Johnson D."/>
            <person name="Joy A."/>
            <person name="Kay M."/>
            <person name="Kershaw J.K."/>
            <person name="Kibukawa M."/>
            <person name="Kimberley A.M."/>
            <person name="King A."/>
            <person name="Knights A.J."/>
            <person name="Lad H."/>
            <person name="Laird G."/>
            <person name="Lawlor S."/>
            <person name="Leongamornlert D.A."/>
            <person name="Lloyd D.M."/>
            <person name="Loveland J."/>
            <person name="Lovell J."/>
            <person name="Lush M.J."/>
            <person name="Lyne R."/>
            <person name="Martin S."/>
            <person name="Mashreghi-Mohammadi M."/>
            <person name="Matthews L."/>
            <person name="Matthews N.S.W."/>
            <person name="McLaren S."/>
            <person name="Milne S."/>
            <person name="Mistry S."/>
            <person name="Moore M.J.F."/>
            <person name="Nickerson T."/>
            <person name="O'Dell C.N."/>
            <person name="Oliver K."/>
            <person name="Palmeiri A."/>
            <person name="Palmer S.A."/>
            <person name="Parker A."/>
            <person name="Patel D."/>
            <person name="Pearce A.V."/>
            <person name="Peck A.I."/>
            <person name="Pelan S."/>
            <person name="Phelps K."/>
            <person name="Phillimore B.J."/>
            <person name="Plumb R."/>
            <person name="Rajan J."/>
            <person name="Raymond C."/>
            <person name="Rouse G."/>
            <person name="Saenphimmachak C."/>
            <person name="Sehra H.K."/>
            <person name="Sheridan E."/>
            <person name="Shownkeen R."/>
            <person name="Sims S."/>
            <person name="Skuce C.D."/>
            <person name="Smith M."/>
            <person name="Steward C."/>
            <person name="Subramanian S."/>
            <person name="Sycamore N."/>
            <person name="Tracey A."/>
            <person name="Tromans A."/>
            <person name="Van Helmond Z."/>
            <person name="Wall M."/>
            <person name="Wallis J.M."/>
            <person name="White S."/>
            <person name="Whitehead S.L."/>
            <person name="Wilkinson J.E."/>
            <person name="Willey D.L."/>
            <person name="Williams H."/>
            <person name="Wilming L."/>
            <person name="Wray P.W."/>
            <person name="Wu Z."/>
            <person name="Coulson A."/>
            <person name="Vaudin M."/>
            <person name="Sulston J.E."/>
            <person name="Durbin R.M."/>
            <person name="Hubbard T."/>
            <person name="Wooster R."/>
            <person name="Dunham I."/>
            <person name="Carter N.P."/>
            <person name="McVean G."/>
            <person name="Ross M.T."/>
            <person name="Harrow J."/>
            <person name="Olson M.V."/>
            <person name="Beck S."/>
            <person name="Rogers J."/>
            <person name="Bentley D.R."/>
        </authorList>
    </citation>
    <scope>NUCLEOTIDE SEQUENCE [LARGE SCALE GENOMIC DNA]</scope>
</reference>
<reference key="3">
    <citation type="journal article" date="2004" name="Genome Res.">
        <title>The status, quality, and expansion of the NIH full-length cDNA project: the Mammalian Gene Collection (MGC).</title>
        <authorList>
            <consortium name="The MGC Project Team"/>
        </authorList>
    </citation>
    <scope>NUCLEOTIDE SEQUENCE [LARGE SCALE MRNA]</scope>
    <scope>VARIANTS VAL-148; ARG-536 AND ASP-821</scope>
    <source>
        <tissue>Testis</tissue>
    </source>
</reference>
<reference key="4">
    <citation type="journal article" date="2004" name="Nat. Genet.">
        <title>Complete sequencing and characterization of 21,243 full-length human cDNAs.</title>
        <authorList>
            <person name="Ota T."/>
            <person name="Suzuki Y."/>
            <person name="Nishikawa T."/>
            <person name="Otsuki T."/>
            <person name="Sugiyama T."/>
            <person name="Irie R."/>
            <person name="Wakamatsu A."/>
            <person name="Hayashi K."/>
            <person name="Sato H."/>
            <person name="Nagai K."/>
            <person name="Kimura K."/>
            <person name="Makita H."/>
            <person name="Sekine M."/>
            <person name="Obayashi M."/>
            <person name="Nishi T."/>
            <person name="Shibahara T."/>
            <person name="Tanaka T."/>
            <person name="Ishii S."/>
            <person name="Yamamoto J."/>
            <person name="Saito K."/>
            <person name="Kawai Y."/>
            <person name="Isono Y."/>
            <person name="Nakamura Y."/>
            <person name="Nagahari K."/>
            <person name="Murakami K."/>
            <person name="Yasuda T."/>
            <person name="Iwayanagi T."/>
            <person name="Wagatsuma M."/>
            <person name="Shiratori A."/>
            <person name="Sudo H."/>
            <person name="Hosoiri T."/>
            <person name="Kaku Y."/>
            <person name="Kodaira H."/>
            <person name="Kondo H."/>
            <person name="Sugawara M."/>
            <person name="Takahashi M."/>
            <person name="Kanda K."/>
            <person name="Yokoi T."/>
            <person name="Furuya T."/>
            <person name="Kikkawa E."/>
            <person name="Omura Y."/>
            <person name="Abe K."/>
            <person name="Kamihara K."/>
            <person name="Katsuta N."/>
            <person name="Sato K."/>
            <person name="Tanikawa M."/>
            <person name="Yamazaki M."/>
            <person name="Ninomiya K."/>
            <person name="Ishibashi T."/>
            <person name="Yamashita H."/>
            <person name="Murakawa K."/>
            <person name="Fujimori K."/>
            <person name="Tanai H."/>
            <person name="Kimata M."/>
            <person name="Watanabe M."/>
            <person name="Hiraoka S."/>
            <person name="Chiba Y."/>
            <person name="Ishida S."/>
            <person name="Ono Y."/>
            <person name="Takiguchi S."/>
            <person name="Watanabe S."/>
            <person name="Yosida M."/>
            <person name="Hotuta T."/>
            <person name="Kusano J."/>
            <person name="Kanehori K."/>
            <person name="Takahashi-Fujii A."/>
            <person name="Hara H."/>
            <person name="Tanase T.-O."/>
            <person name="Nomura Y."/>
            <person name="Togiya S."/>
            <person name="Komai F."/>
            <person name="Hara R."/>
            <person name="Takeuchi K."/>
            <person name="Arita M."/>
            <person name="Imose N."/>
            <person name="Musashino K."/>
            <person name="Yuuki H."/>
            <person name="Oshima A."/>
            <person name="Sasaki N."/>
            <person name="Aotsuka S."/>
            <person name="Yoshikawa Y."/>
            <person name="Matsunawa H."/>
            <person name="Ichihara T."/>
            <person name="Shiohata N."/>
            <person name="Sano S."/>
            <person name="Moriya S."/>
            <person name="Momiyama H."/>
            <person name="Satoh N."/>
            <person name="Takami S."/>
            <person name="Terashima Y."/>
            <person name="Suzuki O."/>
            <person name="Nakagawa S."/>
            <person name="Senoh A."/>
            <person name="Mizoguchi H."/>
            <person name="Goto Y."/>
            <person name="Shimizu F."/>
            <person name="Wakebe H."/>
            <person name="Hishigaki H."/>
            <person name="Watanabe T."/>
            <person name="Sugiyama A."/>
            <person name="Takemoto M."/>
            <person name="Kawakami B."/>
            <person name="Yamazaki M."/>
            <person name="Watanabe K."/>
            <person name="Kumagai A."/>
            <person name="Itakura S."/>
            <person name="Fukuzumi Y."/>
            <person name="Fujimori Y."/>
            <person name="Komiyama M."/>
            <person name="Tashiro H."/>
            <person name="Tanigami A."/>
            <person name="Fujiwara T."/>
            <person name="Ono T."/>
            <person name="Yamada K."/>
            <person name="Fujii Y."/>
            <person name="Ozaki K."/>
            <person name="Hirao M."/>
            <person name="Ohmori Y."/>
            <person name="Kawabata A."/>
            <person name="Hikiji T."/>
            <person name="Kobatake N."/>
            <person name="Inagaki H."/>
            <person name="Ikema Y."/>
            <person name="Okamoto S."/>
            <person name="Okitani R."/>
            <person name="Kawakami T."/>
            <person name="Noguchi S."/>
            <person name="Itoh T."/>
            <person name="Shigeta K."/>
            <person name="Senba T."/>
            <person name="Matsumura K."/>
            <person name="Nakajima Y."/>
            <person name="Mizuno T."/>
            <person name="Morinaga M."/>
            <person name="Sasaki M."/>
            <person name="Togashi T."/>
            <person name="Oyama M."/>
            <person name="Hata H."/>
            <person name="Watanabe M."/>
            <person name="Komatsu T."/>
            <person name="Mizushima-Sugano J."/>
            <person name="Satoh T."/>
            <person name="Shirai Y."/>
            <person name="Takahashi Y."/>
            <person name="Nakagawa K."/>
            <person name="Okumura K."/>
            <person name="Nagase T."/>
            <person name="Nomura N."/>
            <person name="Kikuchi H."/>
            <person name="Masuho Y."/>
            <person name="Yamashita R."/>
            <person name="Nakai K."/>
            <person name="Yada T."/>
            <person name="Nakamura Y."/>
            <person name="Ohara O."/>
            <person name="Isogai T."/>
            <person name="Sugano S."/>
        </authorList>
    </citation>
    <scope>NUCLEOTIDE SEQUENCE [LARGE SCALE MRNA] OF 613-900</scope>
    <source>
        <tissue>Colon</tissue>
    </source>
</reference>
<dbReference type="EMBL" id="AF288392">
    <property type="protein sequence ID" value="AAG60612.1"/>
    <property type="molecule type" value="mRNA"/>
</dbReference>
<dbReference type="EMBL" id="AL136133">
    <property type="status" value="NOT_ANNOTATED_CDS"/>
    <property type="molecule type" value="Genomic_DNA"/>
</dbReference>
<dbReference type="EMBL" id="AL356273">
    <property type="status" value="NOT_ANNOTATED_CDS"/>
    <property type="molecule type" value="Genomic_DNA"/>
</dbReference>
<dbReference type="EMBL" id="BC030781">
    <property type="protein sequence ID" value="AAH30781.1"/>
    <property type="molecule type" value="mRNA"/>
</dbReference>
<dbReference type="EMBL" id="AK000128">
    <property type="protein sequence ID" value="BAA90960.1"/>
    <property type="status" value="ALT_INIT"/>
    <property type="molecule type" value="mRNA"/>
</dbReference>
<dbReference type="CCDS" id="CCDS1367.1"/>
<dbReference type="RefSeq" id="NP_001098988.1">
    <property type="nucleotide sequence ID" value="NM_001105518.2"/>
</dbReference>
<dbReference type="RefSeq" id="NP_060143.4">
    <property type="nucleotide sequence ID" value="NM_017673.6"/>
</dbReference>
<dbReference type="RefSeq" id="XP_016857016.1">
    <property type="nucleotide sequence ID" value="XM_017001527.2"/>
</dbReference>
<dbReference type="RefSeq" id="XP_024303522.1">
    <property type="nucleotide sequence ID" value="XM_024447754.2"/>
</dbReference>
<dbReference type="RefSeq" id="XP_047279199.1">
    <property type="nucleotide sequence ID" value="XM_047423243.1"/>
</dbReference>
<dbReference type="RefSeq" id="XP_054193187.1">
    <property type="nucleotide sequence ID" value="XM_054337212.1"/>
</dbReference>
<dbReference type="RefSeq" id="XP_054193188.1">
    <property type="nucleotide sequence ID" value="XM_054337213.1"/>
</dbReference>
<dbReference type="RefSeq" id="XP_054193189.1">
    <property type="nucleotide sequence ID" value="XM_054337214.1"/>
</dbReference>
<dbReference type="SMR" id="Q5T5J6"/>
<dbReference type="BioGRID" id="120178">
    <property type="interactions" value="6"/>
</dbReference>
<dbReference type="FunCoup" id="Q5T5J6">
    <property type="interactions" value="2048"/>
</dbReference>
<dbReference type="IntAct" id="Q5T5J6">
    <property type="interactions" value="2"/>
</dbReference>
<dbReference type="STRING" id="9606.ENSP00000356470"/>
<dbReference type="GlyGen" id="Q5T5J6">
    <property type="glycosylation" value="6 sites, 1 O-linked glycan (6 sites)"/>
</dbReference>
<dbReference type="iPTMnet" id="Q5T5J6"/>
<dbReference type="PhosphoSitePlus" id="Q5T5J6"/>
<dbReference type="BioMuta" id="SWT1"/>
<dbReference type="DMDM" id="74745081"/>
<dbReference type="MassIVE" id="Q5T5J6"/>
<dbReference type="PaxDb" id="9606-ENSP00000356470"/>
<dbReference type="PeptideAtlas" id="Q5T5J6"/>
<dbReference type="ProteomicsDB" id="64524"/>
<dbReference type="Antibodypedia" id="20611">
    <property type="antibodies" value="65 antibodies from 16 providers"/>
</dbReference>
<dbReference type="DNASU" id="54823"/>
<dbReference type="Ensembl" id="ENST00000367500.9">
    <property type="protein sequence ID" value="ENSP00000356470.4"/>
    <property type="gene ID" value="ENSG00000116668.13"/>
</dbReference>
<dbReference type="Ensembl" id="ENST00000367501.7">
    <property type="protein sequence ID" value="ENSP00000356471.3"/>
    <property type="gene ID" value="ENSG00000116668.13"/>
</dbReference>
<dbReference type="GeneID" id="54823"/>
<dbReference type="KEGG" id="hsa:54823"/>
<dbReference type="MANE-Select" id="ENST00000367500.9">
    <property type="protein sequence ID" value="ENSP00000356470.4"/>
    <property type="RefSeq nucleotide sequence ID" value="NM_017673.7"/>
    <property type="RefSeq protein sequence ID" value="NP_060143.4"/>
</dbReference>
<dbReference type="UCSC" id="uc001grg.5">
    <property type="organism name" value="human"/>
</dbReference>
<dbReference type="AGR" id="HGNC:16785"/>
<dbReference type="CTD" id="54823"/>
<dbReference type="DisGeNET" id="54823"/>
<dbReference type="GeneCards" id="SWT1"/>
<dbReference type="HGNC" id="HGNC:16785">
    <property type="gene designation" value="SWT1"/>
</dbReference>
<dbReference type="HPA" id="ENSG00000116668">
    <property type="expression patterns" value="Tissue enriched (testis)"/>
</dbReference>
<dbReference type="MIM" id="619513">
    <property type="type" value="gene"/>
</dbReference>
<dbReference type="neXtProt" id="NX_Q5T5J6"/>
<dbReference type="OpenTargets" id="ENSG00000116668"/>
<dbReference type="PharmGKB" id="PA25613"/>
<dbReference type="VEuPathDB" id="HostDB:ENSG00000116668"/>
<dbReference type="eggNOG" id="KOG4689">
    <property type="taxonomic scope" value="Eukaryota"/>
</dbReference>
<dbReference type="GeneTree" id="ENSGT00390000001254"/>
<dbReference type="HOGENOM" id="CLU_015080_0_0_1"/>
<dbReference type="InParanoid" id="Q5T5J6"/>
<dbReference type="OMA" id="PWIVVQE"/>
<dbReference type="OrthoDB" id="548295at2759"/>
<dbReference type="PAN-GO" id="Q5T5J6">
    <property type="GO annotations" value="1 GO annotation based on evolutionary models"/>
</dbReference>
<dbReference type="PhylomeDB" id="Q5T5J6"/>
<dbReference type="TreeFam" id="TF335526"/>
<dbReference type="PathwayCommons" id="Q5T5J6"/>
<dbReference type="BioGRID-ORCS" id="54823">
    <property type="hits" value="11 hits in 1154 CRISPR screens"/>
</dbReference>
<dbReference type="ChiTaRS" id="SWT1">
    <property type="organism name" value="human"/>
</dbReference>
<dbReference type="GenomeRNAi" id="54823"/>
<dbReference type="Pharos" id="Q5T5J6">
    <property type="development level" value="Tbio"/>
</dbReference>
<dbReference type="PRO" id="PR:Q5T5J6"/>
<dbReference type="Proteomes" id="UP000005640">
    <property type="component" value="Chromosome 1"/>
</dbReference>
<dbReference type="RNAct" id="Q5T5J6">
    <property type="molecule type" value="protein"/>
</dbReference>
<dbReference type="Bgee" id="ENSG00000116668">
    <property type="expression patterns" value="Expressed in sperm and 157 other cell types or tissues"/>
</dbReference>
<dbReference type="ExpressionAtlas" id="Q5T5J6">
    <property type="expression patterns" value="baseline and differential"/>
</dbReference>
<dbReference type="GO" id="GO:0005634">
    <property type="term" value="C:nucleus"/>
    <property type="evidence" value="ECO:0000318"/>
    <property type="project" value="GO_Central"/>
</dbReference>
<dbReference type="CDD" id="cd18727">
    <property type="entry name" value="PIN_Swt1-like"/>
    <property type="match status" value="1"/>
</dbReference>
<dbReference type="FunFam" id="3.40.50.1010:FF:000012">
    <property type="entry name" value="SWT1, RNA endoribonuclease homolog"/>
    <property type="match status" value="1"/>
</dbReference>
<dbReference type="Gene3D" id="3.40.50.1010">
    <property type="entry name" value="5'-nuclease"/>
    <property type="match status" value="1"/>
</dbReference>
<dbReference type="InterPro" id="IPR029060">
    <property type="entry name" value="PIN-like_dom_sf"/>
</dbReference>
<dbReference type="InterPro" id="IPR002716">
    <property type="entry name" value="PIN_dom"/>
</dbReference>
<dbReference type="InterPro" id="IPR052626">
    <property type="entry name" value="SWT1_Regulator"/>
</dbReference>
<dbReference type="PANTHER" id="PTHR16161">
    <property type="entry name" value="TRANSCRIPTIONAL PROTEIN SWT1"/>
    <property type="match status" value="1"/>
</dbReference>
<dbReference type="PANTHER" id="PTHR16161:SF0">
    <property type="entry name" value="TRANSCRIPTIONAL PROTEIN SWT1"/>
    <property type="match status" value="1"/>
</dbReference>
<dbReference type="Pfam" id="PF13638">
    <property type="entry name" value="PIN_4"/>
    <property type="match status" value="1"/>
</dbReference>
<dbReference type="SMART" id="SM00670">
    <property type="entry name" value="PINc"/>
    <property type="match status" value="1"/>
</dbReference>
<dbReference type="SUPFAM" id="SSF88723">
    <property type="entry name" value="PIN domain-like"/>
    <property type="match status" value="1"/>
</dbReference>
<gene>
    <name type="primary">SWT1</name>
    <name type="synonym">C1orf26</name>
</gene>
<proteinExistence type="evidence at protein level"/>
<sequence>MSSKESCGKKETSQRKDTTTSSPNFGEKDKKERKTPASSTSSSSIRSVSSEKRKLKSDHTDVLYYNIKRRQGLKRLSVEIDTLRRRPKIGSSSQRPIKLKEASYSNDNQIILQSPSSNGTKKDIHKCVDFKPKDIKLTNAGSKLDHGIKSLSSPKIASDVKPKAEGQASENKWSHLLVQREKMKELKKGRNSKFRDNSEKCVLEKWKRNQFSQDYNSNKIIKEPLGSRRQKISFKIPIKSRDTLQKLVEENVFNIDSNNSKTKQEEREYLESSQVSLNVTRQKTEHLLSDFTYKRTVHEWKRKHHYDHQESNDSHSRENLTQSFEAPCCSVSSESIQDADQEMQIVEELHAARVGKSVDLPGELMSMEIDLEDDVHSSSANNTSDRKLLIVIDTNILMNHLKFVRILKTTEVPGFDKLVLIIPWVVMQELDRMKEGKLLKRAQHKAIPAVHFINDSLKNQDRKLWGQSIQLASQKHYGLSDENNDDRVLKCCLQHQELFPCSFVILCTDDRNLRNKGLISGVKSLSKEELSAELLHLSLNTDVCHQPCIPKQQLKAETTPLKESYKEESTNSGLSILLESIVSDLEKSLGTGLSSILETEMKIAFGNLWMEILYLKPPWTLLHLLQCFKKHWLAVFGLVMEKNLLLTIESLYKNLRKANKAVDFTTVKFLLQDSRSLLHAFSTRSNYDGILPQTFAQVNNLLQTFAEVKTKLKPNSSENTVTKKQEGTSLKNSHNQEITVFSSSHLPQPSRHQEIWSILESVWITIYQNSTDVFQRLGSNSALTTSNIASFEEAFICLQKLMAAVRDILEGIQRILAPNSNYQDVETLYNFLIKYEVNKNVKFTAQEIYDCVSQTEYREKLTIGCRQLVEMEYTMQQCNASVYMEAKNRGWCEDMLNYRI</sequence>
<keyword id="KW-1267">Proteomics identification</keyword>
<keyword id="KW-1185">Reference proteome</keyword>
<comment type="tissue specificity">
    <text evidence="3">Expressed weakly in testis.</text>
</comment>
<comment type="similarity">
    <text evidence="5">Belongs to the SWT1 family.</text>
</comment>
<comment type="sequence caution" evidence="5">
    <conflict type="erroneous initiation">
        <sequence resource="EMBL-CDS" id="BAA90960"/>
    </conflict>
    <text>Truncated N-terminus.</text>
</comment>
<organism>
    <name type="scientific">Homo sapiens</name>
    <name type="common">Human</name>
    <dbReference type="NCBI Taxonomy" id="9606"/>
    <lineage>
        <taxon>Eukaryota</taxon>
        <taxon>Metazoa</taxon>
        <taxon>Chordata</taxon>
        <taxon>Craniata</taxon>
        <taxon>Vertebrata</taxon>
        <taxon>Euteleostomi</taxon>
        <taxon>Mammalia</taxon>
        <taxon>Eutheria</taxon>
        <taxon>Euarchontoglires</taxon>
        <taxon>Primates</taxon>
        <taxon>Haplorrhini</taxon>
        <taxon>Catarrhini</taxon>
        <taxon>Hominidae</taxon>
        <taxon>Homo</taxon>
    </lineage>
</organism>